<gene>
    <name evidence="1" type="primary">btuB</name>
    <name type="ordered locus">STM4130</name>
</gene>
<keyword id="KW-0106">Calcium</keyword>
<keyword id="KW-0998">Cell outer membrane</keyword>
<keyword id="KW-0406">Ion transport</keyword>
<keyword id="KW-0472">Membrane</keyword>
<keyword id="KW-0479">Metal-binding</keyword>
<keyword id="KW-0626">Porin</keyword>
<keyword id="KW-1185">Reference proteome</keyword>
<keyword id="KW-0732">Signal</keyword>
<keyword id="KW-0798">TonB box</keyword>
<keyword id="KW-0812">Transmembrane</keyword>
<keyword id="KW-1134">Transmembrane beta strand</keyword>
<keyword id="KW-0813">Transport</keyword>
<protein>
    <recommendedName>
        <fullName evidence="1">Vitamin B12 transporter BtuB</fullName>
    </recommendedName>
    <alternativeName>
        <fullName evidence="1">Cobalamin receptor</fullName>
    </alternativeName>
    <alternativeName>
        <fullName evidence="1">Outer membrane cobalamin translocator</fullName>
    </alternativeName>
</protein>
<name>BTUB_SALTY</name>
<dbReference type="EMBL" id="M89481">
    <property type="protein sequence ID" value="AAA27031.1"/>
    <property type="molecule type" value="Genomic_DNA"/>
</dbReference>
<dbReference type="EMBL" id="AE006468">
    <property type="protein sequence ID" value="AAL22968.1"/>
    <property type="molecule type" value="Genomic_DNA"/>
</dbReference>
<dbReference type="RefSeq" id="NP_463009.1">
    <property type="nucleotide sequence ID" value="NC_003197.2"/>
</dbReference>
<dbReference type="RefSeq" id="WP_000591398.1">
    <property type="nucleotide sequence ID" value="NC_003197.2"/>
</dbReference>
<dbReference type="SMR" id="P37409"/>
<dbReference type="STRING" id="99287.STM4130"/>
<dbReference type="PaxDb" id="99287-STM4130"/>
<dbReference type="GeneID" id="1255656"/>
<dbReference type="KEGG" id="stm:STM4130"/>
<dbReference type="PATRIC" id="fig|99287.12.peg.4351"/>
<dbReference type="HOGENOM" id="CLU_008287_18_5_6"/>
<dbReference type="OMA" id="SYELQWR"/>
<dbReference type="PhylomeDB" id="P37409"/>
<dbReference type="BioCyc" id="SENT99287:STM4130-MONOMER"/>
<dbReference type="Proteomes" id="UP000001014">
    <property type="component" value="Chromosome"/>
</dbReference>
<dbReference type="GO" id="GO:0009279">
    <property type="term" value="C:cell outer membrane"/>
    <property type="evidence" value="ECO:0000318"/>
    <property type="project" value="GO_Central"/>
</dbReference>
<dbReference type="GO" id="GO:0046930">
    <property type="term" value="C:pore complex"/>
    <property type="evidence" value="ECO:0007669"/>
    <property type="project" value="UniProtKB-KW"/>
</dbReference>
<dbReference type="GO" id="GO:0015420">
    <property type="term" value="F:ABC-type vitamin B12 transporter activity"/>
    <property type="evidence" value="ECO:0007669"/>
    <property type="project" value="InterPro"/>
</dbReference>
<dbReference type="GO" id="GO:0046872">
    <property type="term" value="F:metal ion binding"/>
    <property type="evidence" value="ECO:0007669"/>
    <property type="project" value="UniProtKB-KW"/>
</dbReference>
<dbReference type="GO" id="GO:0015288">
    <property type="term" value="F:porin activity"/>
    <property type="evidence" value="ECO:0007669"/>
    <property type="project" value="UniProtKB-KW"/>
</dbReference>
<dbReference type="GO" id="GO:0015889">
    <property type="term" value="P:cobalamin transport"/>
    <property type="evidence" value="ECO:0000318"/>
    <property type="project" value="GO_Central"/>
</dbReference>
<dbReference type="GO" id="GO:0006811">
    <property type="term" value="P:monoatomic ion transport"/>
    <property type="evidence" value="ECO:0007669"/>
    <property type="project" value="UniProtKB-KW"/>
</dbReference>
<dbReference type="CDD" id="cd01347">
    <property type="entry name" value="ligand_gated_channel"/>
    <property type="match status" value="1"/>
</dbReference>
<dbReference type="FunFam" id="2.170.130.10:FF:000002">
    <property type="entry name" value="Vitamin B12 transporter BtuB"/>
    <property type="match status" value="1"/>
</dbReference>
<dbReference type="FunFam" id="2.40.170.20:FF:000001">
    <property type="entry name" value="Vitamin B12 transporter BtuB"/>
    <property type="match status" value="1"/>
</dbReference>
<dbReference type="Gene3D" id="2.40.170.20">
    <property type="entry name" value="TonB-dependent receptor, beta-barrel domain"/>
    <property type="match status" value="1"/>
</dbReference>
<dbReference type="Gene3D" id="2.170.130.10">
    <property type="entry name" value="TonB-dependent receptor, plug domain"/>
    <property type="match status" value="1"/>
</dbReference>
<dbReference type="HAMAP" id="MF_01531">
    <property type="entry name" value="BtuB"/>
    <property type="match status" value="1"/>
</dbReference>
<dbReference type="InterPro" id="IPR010101">
    <property type="entry name" value="B12_transptr_BtuB"/>
</dbReference>
<dbReference type="InterPro" id="IPR012910">
    <property type="entry name" value="Plug_dom"/>
</dbReference>
<dbReference type="InterPro" id="IPR037066">
    <property type="entry name" value="Plug_dom_sf"/>
</dbReference>
<dbReference type="InterPro" id="IPR039426">
    <property type="entry name" value="TonB-dep_rcpt-like"/>
</dbReference>
<dbReference type="InterPro" id="IPR000531">
    <property type="entry name" value="TonB-dep_rcpt_b-brl"/>
</dbReference>
<dbReference type="InterPro" id="IPR010916">
    <property type="entry name" value="TonB_box_CS"/>
</dbReference>
<dbReference type="InterPro" id="IPR036942">
    <property type="entry name" value="TonB_rcpt_b-brl_sf"/>
</dbReference>
<dbReference type="InterPro" id="IPR010917">
    <property type="entry name" value="TonB_rcpt_CS"/>
</dbReference>
<dbReference type="NCBIfam" id="NF007926">
    <property type="entry name" value="PRK10641.1"/>
    <property type="match status" value="1"/>
</dbReference>
<dbReference type="NCBIfam" id="TIGR01779">
    <property type="entry name" value="TonB-B12"/>
    <property type="match status" value="1"/>
</dbReference>
<dbReference type="PANTHER" id="PTHR30069:SF53">
    <property type="entry name" value="COLICIN I RECEPTOR-RELATED"/>
    <property type="match status" value="1"/>
</dbReference>
<dbReference type="PANTHER" id="PTHR30069">
    <property type="entry name" value="TONB-DEPENDENT OUTER MEMBRANE RECEPTOR"/>
    <property type="match status" value="1"/>
</dbReference>
<dbReference type="Pfam" id="PF07715">
    <property type="entry name" value="Plug"/>
    <property type="match status" value="1"/>
</dbReference>
<dbReference type="Pfam" id="PF00593">
    <property type="entry name" value="TonB_dep_Rec_b-barrel"/>
    <property type="match status" value="1"/>
</dbReference>
<dbReference type="SUPFAM" id="SSF56935">
    <property type="entry name" value="Porins"/>
    <property type="match status" value="1"/>
</dbReference>
<dbReference type="PROSITE" id="PS00430">
    <property type="entry name" value="TONB_DEPENDENT_REC_1"/>
    <property type="match status" value="1"/>
</dbReference>
<dbReference type="PROSITE" id="PS01156">
    <property type="entry name" value="TONB_DEPENDENT_REC_2"/>
    <property type="match status" value="1"/>
</dbReference>
<dbReference type="PROSITE" id="PS52016">
    <property type="entry name" value="TONB_DEPENDENT_REC_3"/>
    <property type="match status" value="1"/>
</dbReference>
<feature type="signal peptide" evidence="1">
    <location>
        <begin position="1"/>
        <end position="20"/>
    </location>
</feature>
<feature type="chain" id="PRO_0000003489" description="Vitamin B12 transporter BtuB">
    <location>
        <begin position="21"/>
        <end position="614"/>
    </location>
</feature>
<feature type="transmembrane region" description="Beta stranded" evidence="1">
    <location>
        <begin position="158"/>
        <end position="165"/>
    </location>
</feature>
<feature type="transmembrane region" description="Beta stranded" evidence="1">
    <location>
        <begin position="169"/>
        <end position="178"/>
    </location>
</feature>
<feature type="transmembrane region" description="Beta stranded" evidence="1">
    <location>
        <begin position="184"/>
        <end position="195"/>
    </location>
</feature>
<feature type="transmembrane region" description="Beta stranded" evidence="1">
    <location>
        <begin position="217"/>
        <end position="227"/>
    </location>
</feature>
<feature type="transmembrane region" description="Beta stranded" evidence="1">
    <location>
        <begin position="232"/>
        <end position="248"/>
    </location>
</feature>
<feature type="transmembrane region" description="Beta stranded" evidence="1">
    <location>
        <begin position="263"/>
        <end position="277"/>
    </location>
</feature>
<feature type="transmembrane region" description="Beta stranded" evidence="1">
    <location>
        <begin position="279"/>
        <end position="296"/>
    </location>
</feature>
<feature type="transmembrane region" description="Beta stranded" evidence="1">
    <location>
        <begin position="309"/>
        <end position="325"/>
    </location>
</feature>
<feature type="transmembrane region" description="Beta stranded" evidence="1">
    <location>
        <begin position="328"/>
        <end position="337"/>
    </location>
</feature>
<feature type="transmembrane region" description="Beta stranded" evidence="1">
    <location>
        <begin position="353"/>
        <end position="369"/>
    </location>
</feature>
<feature type="transmembrane region" description="Beta stranded" evidence="1">
    <location>
        <begin position="371"/>
        <end position="381"/>
    </location>
</feature>
<feature type="transmembrane region" description="Beta stranded" evidence="1">
    <location>
        <begin position="385"/>
        <end position="400"/>
    </location>
</feature>
<feature type="transmembrane region" description="Beta stranded" evidence="1">
    <location>
        <begin position="403"/>
        <end position="417"/>
    </location>
</feature>
<feature type="transmembrane region" description="Beta stranded" evidence="1">
    <location>
        <begin position="434"/>
        <end position="443"/>
    </location>
</feature>
<feature type="transmembrane region" description="Beta stranded" evidence="1">
    <location>
        <begin position="449"/>
        <end position="458"/>
    </location>
</feature>
<feature type="transmembrane region" description="Beta stranded" evidence="1">
    <location>
        <begin position="473"/>
        <end position="490"/>
    </location>
</feature>
<feature type="transmembrane region" description="Beta stranded" evidence="1">
    <location>
        <begin position="494"/>
        <end position="509"/>
    </location>
</feature>
<feature type="transmembrane region" description="Beta stranded" evidence="1">
    <location>
        <begin position="517"/>
        <end position="529"/>
    </location>
</feature>
<feature type="transmembrane region" description="Beta stranded" evidence="1">
    <location>
        <begin position="535"/>
        <end position="550"/>
    </location>
</feature>
<feature type="transmembrane region" description="Beta stranded" evidence="1">
    <location>
        <begin position="558"/>
        <end position="572"/>
    </location>
</feature>
<feature type="transmembrane region" description="Beta stranded" evidence="1">
    <location>
        <begin position="585"/>
        <end position="596"/>
    </location>
</feature>
<feature type="transmembrane region" description="Beta stranded" evidence="1">
    <location>
        <begin position="602"/>
        <end position="614"/>
    </location>
</feature>
<feature type="domain" description="TBDR plug" evidence="2">
    <location>
        <begin position="38"/>
        <end position="152"/>
    </location>
</feature>
<feature type="domain" description="TBDR beta-barrel" evidence="2">
    <location>
        <begin position="155"/>
        <end position="614"/>
    </location>
</feature>
<feature type="short sequence motif" description="TonB box">
    <location>
        <begin position="26"/>
        <end position="33"/>
    </location>
</feature>
<feature type="short sequence motif" description="TonB C-terminal box">
    <location>
        <begin position="597"/>
        <end position="614"/>
    </location>
</feature>
<feature type="binding site" evidence="1">
    <location>
        <position position="85"/>
    </location>
    <ligand>
        <name>cyanocob(III)alamin</name>
        <dbReference type="ChEBI" id="CHEBI:17439"/>
    </ligand>
</feature>
<feature type="binding site" evidence="1">
    <location>
        <position position="92"/>
    </location>
    <ligand>
        <name>cyanocob(III)alamin</name>
        <dbReference type="ChEBI" id="CHEBI:17439"/>
    </ligand>
</feature>
<feature type="binding site" evidence="1">
    <location>
        <begin position="110"/>
        <end position="111"/>
    </location>
    <ligand>
        <name>cyanocob(III)alamin</name>
        <dbReference type="ChEBI" id="CHEBI:17439"/>
    </ligand>
</feature>
<feature type="binding site" evidence="1">
    <location>
        <position position="199"/>
    </location>
    <ligand>
        <name>Ca(2+)</name>
        <dbReference type="ChEBI" id="CHEBI:29108"/>
        <label>1</label>
    </ligand>
</feature>
<feature type="binding site" evidence="1">
    <location>
        <position position="211"/>
    </location>
    <ligand>
        <name>Ca(2+)</name>
        <dbReference type="ChEBI" id="CHEBI:29108"/>
        <label>1</label>
    </ligand>
</feature>
<feature type="binding site" evidence="1">
    <location>
        <position position="213"/>
    </location>
    <ligand>
        <name>Ca(2+)</name>
        <dbReference type="ChEBI" id="CHEBI:29108"/>
        <label>1</label>
    </ligand>
</feature>
<feature type="binding site" evidence="1">
    <location>
        <position position="213"/>
    </location>
    <ligand>
        <name>Ca(2+)</name>
        <dbReference type="ChEBI" id="CHEBI:29108"/>
        <label>2</label>
    </ligand>
</feature>
<feature type="binding site" evidence="1">
    <location>
        <position position="215"/>
    </location>
    <ligand>
        <name>Ca(2+)</name>
        <dbReference type="ChEBI" id="CHEBI:29108"/>
        <label>1</label>
    </ligand>
</feature>
<feature type="binding site" evidence="1">
    <location>
        <position position="215"/>
    </location>
    <ligand>
        <name>Ca(2+)</name>
        <dbReference type="ChEBI" id="CHEBI:29108"/>
        <label>2</label>
    </ligand>
</feature>
<feature type="binding site" evidence="1">
    <location>
        <position position="249"/>
    </location>
    <ligand>
        <name>Ca(2+)</name>
        <dbReference type="ChEBI" id="CHEBI:29108"/>
        <label>2</label>
    </ligand>
</feature>
<feature type="binding site" evidence="1">
    <location>
        <position position="250"/>
    </location>
    <ligand>
        <name>Ca(2+)</name>
        <dbReference type="ChEBI" id="CHEBI:29108"/>
        <label>1</label>
    </ligand>
</feature>
<feature type="binding site" evidence="1">
    <location>
        <position position="250"/>
    </location>
    <ligand>
        <name>Ca(2+)</name>
        <dbReference type="ChEBI" id="CHEBI:29108"/>
        <label>2</label>
    </ligand>
</feature>
<feature type="binding site" evidence="1">
    <location>
        <position position="251"/>
    </location>
    <ligand>
        <name>cyanocob(III)alamin</name>
        <dbReference type="ChEBI" id="CHEBI:17439"/>
    </ligand>
</feature>
<feature type="binding site" evidence="1">
    <location>
        <position position="261"/>
    </location>
    <ligand>
        <name>Ca(2+)</name>
        <dbReference type="ChEBI" id="CHEBI:29108"/>
        <label>2</label>
    </ligand>
</feature>
<feature type="binding site" evidence="1">
    <location>
        <position position="309"/>
    </location>
    <ligand>
        <name>cyanocob(III)alamin</name>
        <dbReference type="ChEBI" id="CHEBI:17439"/>
    </ligand>
</feature>
<feature type="binding site" evidence="1">
    <location>
        <position position="517"/>
    </location>
    <ligand>
        <name>cyanocob(III)alamin</name>
        <dbReference type="ChEBI" id="CHEBI:17439"/>
    </ligand>
</feature>
<feature type="binding site" evidence="1">
    <location>
        <position position="551"/>
    </location>
    <ligand>
        <name>cyanocob(III)alamin</name>
        <dbReference type="ChEBI" id="CHEBI:17439"/>
    </ligand>
</feature>
<feature type="sequence conflict" description="In Ref. 1; AAA27031." evidence="3" ref="1">
    <original>G</original>
    <variation>R</variation>
    <location>
        <position position="81"/>
    </location>
</feature>
<feature type="sequence conflict" description="In Ref. 1; AAA27031." evidence="3" ref="1">
    <original>R</original>
    <variation>P</variation>
    <location>
        <position position="134"/>
    </location>
</feature>
<feature type="sequence conflict" description="In Ref. 1; AAA27031." evidence="3" ref="1">
    <original>N</original>
    <variation>I</variation>
    <location>
        <position position="183"/>
    </location>
</feature>
<feature type="sequence conflict" description="In Ref. 1; AAA27031." evidence="3" ref="1">
    <original>R</original>
    <variation>S</variation>
    <location>
        <position position="280"/>
    </location>
</feature>
<organism>
    <name type="scientific">Salmonella typhimurium (strain LT2 / SGSC1412 / ATCC 700720)</name>
    <dbReference type="NCBI Taxonomy" id="99287"/>
    <lineage>
        <taxon>Bacteria</taxon>
        <taxon>Pseudomonadati</taxon>
        <taxon>Pseudomonadota</taxon>
        <taxon>Gammaproteobacteria</taxon>
        <taxon>Enterobacterales</taxon>
        <taxon>Enterobacteriaceae</taxon>
        <taxon>Salmonella</taxon>
    </lineage>
</organism>
<sequence>MIKKATLLTAFSVTAFSAWAQDTSPDTLVVTANRFQQPRSAVLAPVTIVTRQDIERWQSTSVNDVLRRLPGVDIAQSGGAGQNSSIFIRGTNSSHVLVLIDGVRLNLAGVSGSADLSQFPVSLVQRIEYIRGPRSAIYGSDAIGGVVNIITTRDNPGTELTAGWGSNSYQNYDISTQQQLGENTRATLIGDYEYTKGFDVVAKGGTGMQAQPDRDGFLSKTLYGALEHTFSDRWSGFVRGYGYDNRTDYDAYYSPGSPLIDTRKLYSQSWDAGLHFNGERIQSQLVSSYSHSKDYNYDPHYGRYDTSATLDEMKQYNVQWTNSVVVGHGNVGAGVDWQKQTTTPGTGYVPEGYDQRNTGVYLTGLQQLGDFTLEAAARSDDNSQFGRHGTWQTSAGWEFIEGYRFIASYGTSYKAPNLGQLYGYYGNPNLNPEKSKQWEGAFEGLTAGVSWRISGYRNDINDMIDYDDHLQKYYNEGKARIKGIEATANFDTGPLTHTVSYDYVDARNAITDTPLPRRSKQMAKYQLDWDVYDFDWGMTYQYLGSRYDSDYSAYPYRTVKMGGVSLWDLTVAYPVTSHLTVRGKIANLFDKDYETVYGYQTAGREYTLSGSYTF</sequence>
<comment type="function">
    <text evidence="1">Involved in the active translocation of vitamin B12 (cyanocobalamin) across the outer membrane to the periplasmic space. It derives its energy for transport by interacting with the trans-periplasmic membrane protein TonB.</text>
</comment>
<comment type="subcellular location">
    <subcellularLocation>
        <location evidence="1">Cell outer membrane</location>
        <topology evidence="1">Multi-pass membrane protein</topology>
    </subcellularLocation>
</comment>
<comment type="similarity">
    <text evidence="1">Belongs to the TonB-dependent receptor family. BtuB (TC 1.B.14.3.1) subfamily.</text>
</comment>
<reference key="1">
    <citation type="journal article" date="1992" name="Res. Microbiol.">
        <title>Conserved structural and regulatory regions in the Salmonella typhimurium btuB gene for the outer membrane vitamin B12 transport protein.</title>
        <authorList>
            <person name="Wei B.Y."/>
            <person name="Bradbeer C."/>
            <person name="Kadner R.J."/>
        </authorList>
    </citation>
    <scope>NUCLEOTIDE SEQUENCE [GENOMIC DNA]</scope>
    <source>
        <strain>LT2</strain>
    </source>
</reference>
<reference key="2">
    <citation type="journal article" date="2001" name="Nature">
        <title>Complete genome sequence of Salmonella enterica serovar Typhimurium LT2.</title>
        <authorList>
            <person name="McClelland M."/>
            <person name="Sanderson K.E."/>
            <person name="Spieth J."/>
            <person name="Clifton S.W."/>
            <person name="Latreille P."/>
            <person name="Courtney L."/>
            <person name="Porwollik S."/>
            <person name="Ali J."/>
            <person name="Dante M."/>
            <person name="Du F."/>
            <person name="Hou S."/>
            <person name="Layman D."/>
            <person name="Leonard S."/>
            <person name="Nguyen C."/>
            <person name="Scott K."/>
            <person name="Holmes A."/>
            <person name="Grewal N."/>
            <person name="Mulvaney E."/>
            <person name="Ryan E."/>
            <person name="Sun H."/>
            <person name="Florea L."/>
            <person name="Miller W."/>
            <person name="Stoneking T."/>
            <person name="Nhan M."/>
            <person name="Waterston R."/>
            <person name="Wilson R.K."/>
        </authorList>
    </citation>
    <scope>NUCLEOTIDE SEQUENCE [LARGE SCALE GENOMIC DNA]</scope>
    <source>
        <strain>LT2 / SGSC1412 / ATCC 700720</strain>
    </source>
</reference>
<proteinExistence type="inferred from homology"/>
<accession>P37409</accession>
<evidence type="ECO:0000255" key="1">
    <source>
        <dbReference type="HAMAP-Rule" id="MF_01531"/>
    </source>
</evidence>
<evidence type="ECO:0000255" key="2">
    <source>
        <dbReference type="PROSITE-ProRule" id="PRU01360"/>
    </source>
</evidence>
<evidence type="ECO:0000305" key="3"/>